<reference key="1">
    <citation type="journal article" date="2008" name="PLoS Genet.">
        <title>Complete genome sequence of the complex carbohydrate-degrading marine bacterium, Saccharophagus degradans strain 2-40 T.</title>
        <authorList>
            <person name="Weiner R.M."/>
            <person name="Taylor L.E. II"/>
            <person name="Henrissat B."/>
            <person name="Hauser L."/>
            <person name="Land M."/>
            <person name="Coutinho P.M."/>
            <person name="Rancurel C."/>
            <person name="Saunders E.H."/>
            <person name="Longmire A.G."/>
            <person name="Zhang H."/>
            <person name="Bayer E.A."/>
            <person name="Gilbert H.J."/>
            <person name="Larimer F."/>
            <person name="Zhulin I.B."/>
            <person name="Ekborg N.A."/>
            <person name="Lamed R."/>
            <person name="Richardson P.M."/>
            <person name="Borovok I."/>
            <person name="Hutcheson S."/>
        </authorList>
    </citation>
    <scope>NUCLEOTIDE SEQUENCE [LARGE SCALE GENOMIC DNA]</scope>
    <source>
        <strain>2-40 / ATCC 43961 / DSM 17024</strain>
    </source>
</reference>
<name>DAPA_SACD2</name>
<organism>
    <name type="scientific">Saccharophagus degradans (strain 2-40 / ATCC 43961 / DSM 17024)</name>
    <dbReference type="NCBI Taxonomy" id="203122"/>
    <lineage>
        <taxon>Bacteria</taxon>
        <taxon>Pseudomonadati</taxon>
        <taxon>Pseudomonadota</taxon>
        <taxon>Gammaproteobacteria</taxon>
        <taxon>Cellvibrionales</taxon>
        <taxon>Cellvibrionaceae</taxon>
        <taxon>Saccharophagus</taxon>
    </lineage>
</organism>
<proteinExistence type="inferred from homology"/>
<feature type="chain" id="PRO_1000050260" description="4-hydroxy-tetrahydrodipicolinate synthase">
    <location>
        <begin position="1"/>
        <end position="291"/>
    </location>
</feature>
<feature type="active site" description="Proton donor/acceptor" evidence="1">
    <location>
        <position position="133"/>
    </location>
</feature>
<feature type="active site" description="Schiff-base intermediate with substrate" evidence="1">
    <location>
        <position position="161"/>
    </location>
</feature>
<feature type="binding site" evidence="1">
    <location>
        <position position="45"/>
    </location>
    <ligand>
        <name>pyruvate</name>
        <dbReference type="ChEBI" id="CHEBI:15361"/>
    </ligand>
</feature>
<feature type="binding site" evidence="1">
    <location>
        <position position="203"/>
    </location>
    <ligand>
        <name>pyruvate</name>
        <dbReference type="ChEBI" id="CHEBI:15361"/>
    </ligand>
</feature>
<feature type="site" description="Part of a proton relay during catalysis" evidence="1">
    <location>
        <position position="44"/>
    </location>
</feature>
<feature type="site" description="Part of a proton relay during catalysis" evidence="1">
    <location>
        <position position="107"/>
    </location>
</feature>
<accession>Q21HE7</accession>
<dbReference type="EC" id="4.3.3.7" evidence="1"/>
<dbReference type="EMBL" id="CP000282">
    <property type="protein sequence ID" value="ABD81882.1"/>
    <property type="molecule type" value="Genomic_DNA"/>
</dbReference>
<dbReference type="RefSeq" id="WP_011469099.1">
    <property type="nucleotide sequence ID" value="NC_007912.1"/>
</dbReference>
<dbReference type="SMR" id="Q21HE7"/>
<dbReference type="STRING" id="203122.Sde_2622"/>
<dbReference type="GeneID" id="98614283"/>
<dbReference type="KEGG" id="sde:Sde_2622"/>
<dbReference type="eggNOG" id="COG0329">
    <property type="taxonomic scope" value="Bacteria"/>
</dbReference>
<dbReference type="HOGENOM" id="CLU_049343_7_1_6"/>
<dbReference type="OrthoDB" id="9782828at2"/>
<dbReference type="UniPathway" id="UPA00034">
    <property type="reaction ID" value="UER00017"/>
</dbReference>
<dbReference type="Proteomes" id="UP000001947">
    <property type="component" value="Chromosome"/>
</dbReference>
<dbReference type="GO" id="GO:0005829">
    <property type="term" value="C:cytosol"/>
    <property type="evidence" value="ECO:0007669"/>
    <property type="project" value="TreeGrafter"/>
</dbReference>
<dbReference type="GO" id="GO:0008840">
    <property type="term" value="F:4-hydroxy-tetrahydrodipicolinate synthase activity"/>
    <property type="evidence" value="ECO:0007669"/>
    <property type="project" value="UniProtKB-UniRule"/>
</dbReference>
<dbReference type="GO" id="GO:0019877">
    <property type="term" value="P:diaminopimelate biosynthetic process"/>
    <property type="evidence" value="ECO:0007669"/>
    <property type="project" value="UniProtKB-UniRule"/>
</dbReference>
<dbReference type="GO" id="GO:0009089">
    <property type="term" value="P:lysine biosynthetic process via diaminopimelate"/>
    <property type="evidence" value="ECO:0007669"/>
    <property type="project" value="UniProtKB-UniRule"/>
</dbReference>
<dbReference type="CDD" id="cd00950">
    <property type="entry name" value="DHDPS"/>
    <property type="match status" value="1"/>
</dbReference>
<dbReference type="Gene3D" id="3.20.20.70">
    <property type="entry name" value="Aldolase class I"/>
    <property type="match status" value="1"/>
</dbReference>
<dbReference type="HAMAP" id="MF_00418">
    <property type="entry name" value="DapA"/>
    <property type="match status" value="1"/>
</dbReference>
<dbReference type="InterPro" id="IPR013785">
    <property type="entry name" value="Aldolase_TIM"/>
</dbReference>
<dbReference type="InterPro" id="IPR005263">
    <property type="entry name" value="DapA"/>
</dbReference>
<dbReference type="InterPro" id="IPR002220">
    <property type="entry name" value="DapA-like"/>
</dbReference>
<dbReference type="InterPro" id="IPR020625">
    <property type="entry name" value="Schiff_base-form_aldolases_AS"/>
</dbReference>
<dbReference type="InterPro" id="IPR020624">
    <property type="entry name" value="Schiff_base-form_aldolases_CS"/>
</dbReference>
<dbReference type="NCBIfam" id="TIGR00674">
    <property type="entry name" value="dapA"/>
    <property type="match status" value="1"/>
</dbReference>
<dbReference type="PANTHER" id="PTHR12128:SF66">
    <property type="entry name" value="4-HYDROXY-2-OXOGLUTARATE ALDOLASE, MITOCHONDRIAL"/>
    <property type="match status" value="1"/>
</dbReference>
<dbReference type="PANTHER" id="PTHR12128">
    <property type="entry name" value="DIHYDRODIPICOLINATE SYNTHASE"/>
    <property type="match status" value="1"/>
</dbReference>
<dbReference type="Pfam" id="PF00701">
    <property type="entry name" value="DHDPS"/>
    <property type="match status" value="1"/>
</dbReference>
<dbReference type="PIRSF" id="PIRSF001365">
    <property type="entry name" value="DHDPS"/>
    <property type="match status" value="1"/>
</dbReference>
<dbReference type="PRINTS" id="PR00146">
    <property type="entry name" value="DHPICSNTHASE"/>
</dbReference>
<dbReference type="SMART" id="SM01130">
    <property type="entry name" value="DHDPS"/>
    <property type="match status" value="1"/>
</dbReference>
<dbReference type="SUPFAM" id="SSF51569">
    <property type="entry name" value="Aldolase"/>
    <property type="match status" value="1"/>
</dbReference>
<dbReference type="PROSITE" id="PS00665">
    <property type="entry name" value="DHDPS_1"/>
    <property type="match status" value="1"/>
</dbReference>
<dbReference type="PROSITE" id="PS00666">
    <property type="entry name" value="DHDPS_2"/>
    <property type="match status" value="1"/>
</dbReference>
<sequence>MLRGSMVALVTPMQADGSLDWEALHKLVDWHLQEGTDAIVAVGTTGESATLDVKEHIAVIRAVVDQVNGRVPVIAGTGANSTSEAIELTQAAKDGGVDACLLVAPYYNKPTQEGLFLHHQKIAASVAIPQLLYNVPGRTAVDMLPETIVRLSHVDNIVGVKEATGDIARVGQILESAKAGFLLISGDDDTAVDFIAAGGVGEISVTANVAPKLVAQMCELAAQGKVEEARAINARLADVHTAMFLESNPIPVKWALAKMGLMPNGIRLPLTPLDAKYHLQVEQALRAANLL</sequence>
<evidence type="ECO:0000255" key="1">
    <source>
        <dbReference type="HAMAP-Rule" id="MF_00418"/>
    </source>
</evidence>
<evidence type="ECO:0000305" key="2"/>
<gene>
    <name evidence="1" type="primary">dapA</name>
    <name type="ordered locus">Sde_2622</name>
</gene>
<comment type="function">
    <text evidence="1">Catalyzes the condensation of (S)-aspartate-beta-semialdehyde [(S)-ASA] and pyruvate to 4-hydroxy-tetrahydrodipicolinate (HTPA).</text>
</comment>
<comment type="catalytic activity">
    <reaction evidence="1">
        <text>L-aspartate 4-semialdehyde + pyruvate = (2S,4S)-4-hydroxy-2,3,4,5-tetrahydrodipicolinate + H2O + H(+)</text>
        <dbReference type="Rhea" id="RHEA:34171"/>
        <dbReference type="ChEBI" id="CHEBI:15361"/>
        <dbReference type="ChEBI" id="CHEBI:15377"/>
        <dbReference type="ChEBI" id="CHEBI:15378"/>
        <dbReference type="ChEBI" id="CHEBI:67139"/>
        <dbReference type="ChEBI" id="CHEBI:537519"/>
        <dbReference type="EC" id="4.3.3.7"/>
    </reaction>
</comment>
<comment type="pathway">
    <text evidence="1">Amino-acid biosynthesis; L-lysine biosynthesis via DAP pathway; (S)-tetrahydrodipicolinate from L-aspartate: step 3/4.</text>
</comment>
<comment type="subunit">
    <text evidence="1">Homotetramer; dimer of dimers.</text>
</comment>
<comment type="subcellular location">
    <subcellularLocation>
        <location evidence="1">Cytoplasm</location>
    </subcellularLocation>
</comment>
<comment type="similarity">
    <text evidence="1">Belongs to the DapA family.</text>
</comment>
<comment type="caution">
    <text evidence="2">Was originally thought to be a dihydrodipicolinate synthase (DHDPS), catalyzing the condensation of (S)-aspartate-beta-semialdehyde [(S)-ASA] and pyruvate to dihydrodipicolinate (DHDP). However, it was shown in E.coli that the product of the enzymatic reaction is not dihydrodipicolinate but in fact (4S)-4-hydroxy-2,3,4,5-tetrahydro-(2S)-dipicolinic acid (HTPA), and that the consecutive dehydration reaction leading to DHDP is not spontaneous but catalyzed by DapB.</text>
</comment>
<protein>
    <recommendedName>
        <fullName evidence="1">4-hydroxy-tetrahydrodipicolinate synthase</fullName>
        <shortName evidence="1">HTPA synthase</shortName>
        <ecNumber evidence="1">4.3.3.7</ecNumber>
    </recommendedName>
</protein>
<keyword id="KW-0028">Amino-acid biosynthesis</keyword>
<keyword id="KW-0963">Cytoplasm</keyword>
<keyword id="KW-0220">Diaminopimelate biosynthesis</keyword>
<keyword id="KW-0456">Lyase</keyword>
<keyword id="KW-0457">Lysine biosynthesis</keyword>
<keyword id="KW-1185">Reference proteome</keyword>
<keyword id="KW-0704">Schiff base</keyword>